<feature type="chain" id="PRO_1000148418" description="UPF0304 protein YfbU">
    <location>
        <begin position="1"/>
        <end position="164"/>
    </location>
</feature>
<organism>
    <name type="scientific">Escherichia coli (strain 55989 / EAEC)</name>
    <dbReference type="NCBI Taxonomy" id="585055"/>
    <lineage>
        <taxon>Bacteria</taxon>
        <taxon>Pseudomonadati</taxon>
        <taxon>Pseudomonadota</taxon>
        <taxon>Gammaproteobacteria</taxon>
        <taxon>Enterobacterales</taxon>
        <taxon>Enterobacteriaceae</taxon>
        <taxon>Escherichia</taxon>
    </lineage>
</organism>
<comment type="similarity">
    <text evidence="1">Belongs to the UPF0304 family.</text>
</comment>
<dbReference type="EMBL" id="CU928145">
    <property type="protein sequence ID" value="CAU98406.1"/>
    <property type="molecule type" value="Genomic_DNA"/>
</dbReference>
<dbReference type="RefSeq" id="WP_000426124.1">
    <property type="nucleotide sequence ID" value="NZ_CP028304.1"/>
</dbReference>
<dbReference type="SMR" id="B7LBE8"/>
<dbReference type="KEGG" id="eck:EC55989_2538"/>
<dbReference type="HOGENOM" id="CLU_101021_1_0_6"/>
<dbReference type="Proteomes" id="UP000000746">
    <property type="component" value="Chromosome"/>
</dbReference>
<dbReference type="FunFam" id="1.10.3190.10:FF:000001">
    <property type="entry name" value="UPF0304 protein YfbU"/>
    <property type="match status" value="1"/>
</dbReference>
<dbReference type="Gene3D" id="1.10.287.680">
    <property type="entry name" value="Helix hairpin bin"/>
    <property type="match status" value="1"/>
</dbReference>
<dbReference type="Gene3D" id="1.10.3190.10">
    <property type="entry name" value="yfbu gene product, domain 2"/>
    <property type="match status" value="1"/>
</dbReference>
<dbReference type="HAMAP" id="MF_00762">
    <property type="entry name" value="UPF0304"/>
    <property type="match status" value="1"/>
</dbReference>
<dbReference type="InterPro" id="IPR005587">
    <property type="entry name" value="UPF0304_YfbU"/>
</dbReference>
<dbReference type="InterPro" id="IPR023146">
    <property type="entry name" value="YfbU_alpha-helical_sf"/>
</dbReference>
<dbReference type="InterPro" id="IPR023145">
    <property type="entry name" value="YfbU_helix-hairpin_sf"/>
</dbReference>
<dbReference type="NCBIfam" id="NF003936">
    <property type="entry name" value="PRK05445.1"/>
    <property type="match status" value="1"/>
</dbReference>
<dbReference type="Pfam" id="PF03887">
    <property type="entry name" value="YfbU"/>
    <property type="match status" value="1"/>
</dbReference>
<dbReference type="PIRSF" id="PIRSF006272">
    <property type="entry name" value="UCP006272"/>
    <property type="match status" value="1"/>
</dbReference>
<dbReference type="SUPFAM" id="SSF116960">
    <property type="entry name" value="YfbU-like"/>
    <property type="match status" value="1"/>
</dbReference>
<accession>B7LBE8</accession>
<proteinExistence type="inferred from homology"/>
<evidence type="ECO:0000255" key="1">
    <source>
        <dbReference type="HAMAP-Rule" id="MF_00762"/>
    </source>
</evidence>
<name>YFBU_ECO55</name>
<protein>
    <recommendedName>
        <fullName evidence="1">UPF0304 protein YfbU</fullName>
    </recommendedName>
</protein>
<keyword id="KW-1185">Reference proteome</keyword>
<sequence>MEMTNAQRLILSNQYKMMTMLDPANAERYRRLQTIIERGYGLQMRELDREFGELKEETCRTIIDIMEMYHALHVSWSNLQDQQSIDERRVTFLGFDAATEARYLGYVRFMVNVEGRYTHFDAGTHGFNAQTPMWEKYQRMLNVWHACPRQYHLSANEINQIINA</sequence>
<gene>
    <name evidence="1" type="primary">yfbU</name>
    <name type="ordered locus">EC55989_2538</name>
</gene>
<reference key="1">
    <citation type="journal article" date="2009" name="PLoS Genet.">
        <title>Organised genome dynamics in the Escherichia coli species results in highly diverse adaptive paths.</title>
        <authorList>
            <person name="Touchon M."/>
            <person name="Hoede C."/>
            <person name="Tenaillon O."/>
            <person name="Barbe V."/>
            <person name="Baeriswyl S."/>
            <person name="Bidet P."/>
            <person name="Bingen E."/>
            <person name="Bonacorsi S."/>
            <person name="Bouchier C."/>
            <person name="Bouvet O."/>
            <person name="Calteau A."/>
            <person name="Chiapello H."/>
            <person name="Clermont O."/>
            <person name="Cruveiller S."/>
            <person name="Danchin A."/>
            <person name="Diard M."/>
            <person name="Dossat C."/>
            <person name="Karoui M.E."/>
            <person name="Frapy E."/>
            <person name="Garry L."/>
            <person name="Ghigo J.M."/>
            <person name="Gilles A.M."/>
            <person name="Johnson J."/>
            <person name="Le Bouguenec C."/>
            <person name="Lescat M."/>
            <person name="Mangenot S."/>
            <person name="Martinez-Jehanne V."/>
            <person name="Matic I."/>
            <person name="Nassif X."/>
            <person name="Oztas S."/>
            <person name="Petit M.A."/>
            <person name="Pichon C."/>
            <person name="Rouy Z."/>
            <person name="Ruf C.S."/>
            <person name="Schneider D."/>
            <person name="Tourret J."/>
            <person name="Vacherie B."/>
            <person name="Vallenet D."/>
            <person name="Medigue C."/>
            <person name="Rocha E.P.C."/>
            <person name="Denamur E."/>
        </authorList>
    </citation>
    <scope>NUCLEOTIDE SEQUENCE [LARGE SCALE GENOMIC DNA]</scope>
    <source>
        <strain>55989 / EAEC</strain>
    </source>
</reference>